<name>YLB9_CAEEL</name>
<keyword id="KW-1185">Reference proteome</keyword>
<reference key="1">
    <citation type="journal article" date="1998" name="Science">
        <title>Genome sequence of the nematode C. elegans: a platform for investigating biology.</title>
        <authorList>
            <consortium name="The C. elegans sequencing consortium"/>
        </authorList>
    </citation>
    <scope>NUCLEOTIDE SEQUENCE [LARGE SCALE GENOMIC DNA]</scope>
    <source>
        <strain>Bristol N2</strain>
    </source>
</reference>
<gene>
    <name type="ORF">C34E10.9</name>
</gene>
<dbReference type="EMBL" id="FO080774">
    <property type="protein sequence ID" value="CCD66653.2"/>
    <property type="molecule type" value="Genomic_DNA"/>
</dbReference>
<dbReference type="PIR" id="T15766">
    <property type="entry name" value="T15766"/>
</dbReference>
<dbReference type="RefSeq" id="NP_498120.2">
    <property type="nucleotide sequence ID" value="NM_065719.3"/>
</dbReference>
<dbReference type="FunCoup" id="P46583">
    <property type="interactions" value="173"/>
</dbReference>
<dbReference type="PaxDb" id="6239-C34E10.9"/>
<dbReference type="EnsemblMetazoa" id="C34E10.9.1">
    <property type="protein sequence ID" value="C34E10.9.1"/>
    <property type="gene ID" value="WBGene00016410"/>
</dbReference>
<dbReference type="GeneID" id="183213"/>
<dbReference type="KEGG" id="cel:CELE_C34E10.9"/>
<dbReference type="UCSC" id="C34E10.9">
    <property type="organism name" value="c. elegans"/>
</dbReference>
<dbReference type="AGR" id="WB:WBGene00016410"/>
<dbReference type="CTD" id="183213"/>
<dbReference type="WormBase" id="C34E10.9">
    <property type="protein sequence ID" value="CE46863"/>
    <property type="gene ID" value="WBGene00016410"/>
</dbReference>
<dbReference type="eggNOG" id="ENOG502TKFX">
    <property type="taxonomic scope" value="Eukaryota"/>
</dbReference>
<dbReference type="HOGENOM" id="CLU_1788573_0_0_1"/>
<dbReference type="InParanoid" id="P46583"/>
<dbReference type="PRO" id="PR:P46583"/>
<dbReference type="Proteomes" id="UP000001940">
    <property type="component" value="Chromosome III"/>
</dbReference>
<dbReference type="Bgee" id="WBGene00016410">
    <property type="expression patterns" value="Expressed in anatomical system and 3 other cell types or tissues"/>
</dbReference>
<evidence type="ECO:0000256" key="1">
    <source>
        <dbReference type="SAM" id="MobiDB-lite"/>
    </source>
</evidence>
<feature type="chain" id="PRO_0000065225" description="Uncharacterized protein C34E10.9">
    <location>
        <begin position="1"/>
        <end position="145"/>
    </location>
</feature>
<feature type="region of interest" description="Disordered" evidence="1">
    <location>
        <begin position="1"/>
        <end position="59"/>
    </location>
</feature>
<organism>
    <name type="scientific">Caenorhabditis elegans</name>
    <dbReference type="NCBI Taxonomy" id="6239"/>
    <lineage>
        <taxon>Eukaryota</taxon>
        <taxon>Metazoa</taxon>
        <taxon>Ecdysozoa</taxon>
        <taxon>Nematoda</taxon>
        <taxon>Chromadorea</taxon>
        <taxon>Rhabditida</taxon>
        <taxon>Rhabditina</taxon>
        <taxon>Rhabditomorpha</taxon>
        <taxon>Rhabditoidea</taxon>
        <taxon>Rhabditidae</taxon>
        <taxon>Peloderinae</taxon>
        <taxon>Caenorhabditis</taxon>
    </lineage>
</organism>
<accession>P46583</accession>
<sequence length="145" mass="16452">MSTGTPHYAADRSKSRKSNNNRSIPFRTPTTQKVVKTSIRLGPVNPPTPTRNTQGGHGFSAEFLEYRRRRQERHTVRLAKLPNETLIIGGANPFDARNVPEAIKKFRDLVDEKIGDKVHKKDANKSKIVFREEEEETQNGTITID</sequence>
<proteinExistence type="predicted"/>
<protein>
    <recommendedName>
        <fullName>Uncharacterized protein C34E10.9</fullName>
    </recommendedName>
</protein>